<evidence type="ECO:0000250" key="1"/>
<evidence type="ECO:0000250" key="2">
    <source>
        <dbReference type="UniProtKB" id="P00157"/>
    </source>
</evidence>
<evidence type="ECO:0000250" key="3">
    <source>
        <dbReference type="UniProtKB" id="P00163"/>
    </source>
</evidence>
<evidence type="ECO:0000255" key="4">
    <source>
        <dbReference type="PROSITE-ProRule" id="PRU00967"/>
    </source>
</evidence>
<evidence type="ECO:0000255" key="5">
    <source>
        <dbReference type="PROSITE-ProRule" id="PRU00968"/>
    </source>
</evidence>
<proteinExistence type="inferred from homology"/>
<name>CYB_ARTSF</name>
<dbReference type="EMBL" id="X69067">
    <property type="protein sequence ID" value="CAA48817.1"/>
    <property type="molecule type" value="Genomic_DNA"/>
</dbReference>
<dbReference type="PIR" id="S60623">
    <property type="entry name" value="S60623"/>
</dbReference>
<dbReference type="RefSeq" id="NP_007119.1">
    <property type="nucleotide sequence ID" value="NC_001620.1"/>
</dbReference>
<dbReference type="SMR" id="Q37713"/>
<dbReference type="GeneID" id="807800"/>
<dbReference type="KEGG" id="afra:807800"/>
<dbReference type="CTD" id="4519"/>
<dbReference type="GO" id="GO:0005743">
    <property type="term" value="C:mitochondrial inner membrane"/>
    <property type="evidence" value="ECO:0007669"/>
    <property type="project" value="UniProtKB-SubCell"/>
</dbReference>
<dbReference type="GO" id="GO:0045275">
    <property type="term" value="C:respiratory chain complex III"/>
    <property type="evidence" value="ECO:0007669"/>
    <property type="project" value="InterPro"/>
</dbReference>
<dbReference type="GO" id="GO:0046872">
    <property type="term" value="F:metal ion binding"/>
    <property type="evidence" value="ECO:0007669"/>
    <property type="project" value="UniProtKB-KW"/>
</dbReference>
<dbReference type="GO" id="GO:0008121">
    <property type="term" value="F:ubiquinol-cytochrome-c reductase activity"/>
    <property type="evidence" value="ECO:0007669"/>
    <property type="project" value="InterPro"/>
</dbReference>
<dbReference type="GO" id="GO:0006122">
    <property type="term" value="P:mitochondrial electron transport, ubiquinol to cytochrome c"/>
    <property type="evidence" value="ECO:0007669"/>
    <property type="project" value="TreeGrafter"/>
</dbReference>
<dbReference type="CDD" id="cd00290">
    <property type="entry name" value="cytochrome_b_C"/>
    <property type="match status" value="1"/>
</dbReference>
<dbReference type="CDD" id="cd00284">
    <property type="entry name" value="Cytochrome_b_N"/>
    <property type="match status" value="1"/>
</dbReference>
<dbReference type="FunFam" id="1.20.810.10:FF:000002">
    <property type="entry name" value="Cytochrome b"/>
    <property type="match status" value="1"/>
</dbReference>
<dbReference type="Gene3D" id="1.20.810.10">
    <property type="entry name" value="Cytochrome Bc1 Complex, Chain C"/>
    <property type="match status" value="1"/>
</dbReference>
<dbReference type="InterPro" id="IPR005798">
    <property type="entry name" value="Cyt_b/b6_C"/>
</dbReference>
<dbReference type="InterPro" id="IPR036150">
    <property type="entry name" value="Cyt_b/b6_C_sf"/>
</dbReference>
<dbReference type="InterPro" id="IPR005797">
    <property type="entry name" value="Cyt_b/b6_N"/>
</dbReference>
<dbReference type="InterPro" id="IPR027387">
    <property type="entry name" value="Cytb/b6-like_sf"/>
</dbReference>
<dbReference type="InterPro" id="IPR030689">
    <property type="entry name" value="Cytochrome_b"/>
</dbReference>
<dbReference type="InterPro" id="IPR048260">
    <property type="entry name" value="Cytochrome_b_C_euk/bac"/>
</dbReference>
<dbReference type="InterPro" id="IPR048259">
    <property type="entry name" value="Cytochrome_b_N_euk/bac"/>
</dbReference>
<dbReference type="InterPro" id="IPR016174">
    <property type="entry name" value="Di-haem_cyt_TM"/>
</dbReference>
<dbReference type="PANTHER" id="PTHR19271">
    <property type="entry name" value="CYTOCHROME B"/>
    <property type="match status" value="1"/>
</dbReference>
<dbReference type="PANTHER" id="PTHR19271:SF16">
    <property type="entry name" value="CYTOCHROME B"/>
    <property type="match status" value="1"/>
</dbReference>
<dbReference type="Pfam" id="PF00032">
    <property type="entry name" value="Cytochrom_B_C"/>
    <property type="match status" value="1"/>
</dbReference>
<dbReference type="Pfam" id="PF00033">
    <property type="entry name" value="Cytochrome_B"/>
    <property type="match status" value="1"/>
</dbReference>
<dbReference type="PIRSF" id="PIRSF038885">
    <property type="entry name" value="COB"/>
    <property type="match status" value="1"/>
</dbReference>
<dbReference type="SUPFAM" id="SSF81648">
    <property type="entry name" value="a domain/subunit of cytochrome bc1 complex (Ubiquinol-cytochrome c reductase)"/>
    <property type="match status" value="1"/>
</dbReference>
<dbReference type="SUPFAM" id="SSF81342">
    <property type="entry name" value="Transmembrane di-heme cytochromes"/>
    <property type="match status" value="1"/>
</dbReference>
<dbReference type="PROSITE" id="PS51003">
    <property type="entry name" value="CYTB_CTER"/>
    <property type="match status" value="1"/>
</dbReference>
<dbReference type="PROSITE" id="PS51002">
    <property type="entry name" value="CYTB_NTER"/>
    <property type="match status" value="1"/>
</dbReference>
<organism>
    <name type="scientific">Artemia franciscana</name>
    <name type="common">Brine shrimp</name>
    <name type="synonym">Artemia sanfranciscana</name>
    <dbReference type="NCBI Taxonomy" id="6661"/>
    <lineage>
        <taxon>Eukaryota</taxon>
        <taxon>Metazoa</taxon>
        <taxon>Ecdysozoa</taxon>
        <taxon>Arthropoda</taxon>
        <taxon>Crustacea</taxon>
        <taxon>Branchiopoda</taxon>
        <taxon>Anostraca</taxon>
        <taxon>Artemiidae</taxon>
        <taxon>Artemia</taxon>
    </lineage>
</organism>
<geneLocation type="mitochondrion"/>
<sequence>MLGNKMLSLPEQQPTLKIINSALVDLPVPANISIWWNFGSLLGLCLLIQIVIGLFLAMHYTAWVELAFSSVANICRDVNYGWLLRTVHANGASFFFICIYFHIGRGMYYGSFHYFETWMTGIALLFLVMAAAFLGYVLPWGQMSFWGATVITNLVSAVPYIGNDVVQWLWGGFAVDNPTLTRFFTFHFLIPFLVAGLTMIHLLFLHQSGSNNPLGINANLDKLPFHPYFTIKDTVGFMVLIFFLVTLSLTSPYLLGDPDNFIPANPLVTPAHIQPEWYFLFAYAILRSIPNKLGGVIALVSSILILVSLPFTFKPKFRGLEFYSVAQPLFWSWVSVFLLLTWIGARPVEDPYNFLGQILTCAYFSYFVFTPIVINLNDKIV</sequence>
<comment type="function">
    <text evidence="2">Component of the ubiquinol-cytochrome c reductase complex (complex III or cytochrome b-c1 complex) that is part of the mitochondrial respiratory chain. The b-c1 complex mediates electron transfer from ubiquinol to cytochrome c. Contributes to the generation of a proton gradient across the mitochondrial membrane that is then used for ATP synthesis.</text>
</comment>
<comment type="cofactor">
    <cofactor evidence="2">
        <name>heme b</name>
        <dbReference type="ChEBI" id="CHEBI:60344"/>
    </cofactor>
    <text evidence="2">Binds 2 heme b groups non-covalently.</text>
</comment>
<comment type="subunit">
    <text evidence="2">The main subunits of complex b-c1 are: cytochrome b, cytochrome c1 and the Rieske protein.</text>
</comment>
<comment type="subcellular location">
    <subcellularLocation>
        <location evidence="3">Mitochondrion inner membrane</location>
        <topology evidence="3">Multi-pass membrane protein</topology>
    </subcellularLocation>
</comment>
<comment type="miscellaneous">
    <text evidence="1">Heme 1 (or BL or b562) is low-potential and absorbs at about 562 nm, and heme 2 (or BH or b566) is high-potential and absorbs at about 566 nm.</text>
</comment>
<comment type="similarity">
    <text evidence="4 5">Belongs to the cytochrome b family.</text>
</comment>
<comment type="caution">
    <text evidence="2">The full-length protein contains only eight transmembrane helices, not nine as predicted by bioinformatics tools.</text>
</comment>
<protein>
    <recommendedName>
        <fullName>Cytochrome b</fullName>
    </recommendedName>
    <alternativeName>
        <fullName>Complex III subunit 3</fullName>
    </alternativeName>
    <alternativeName>
        <fullName>Complex III subunit III</fullName>
    </alternativeName>
    <alternativeName>
        <fullName>Cytochrome b-c1 complex subunit 3</fullName>
    </alternativeName>
    <alternativeName>
        <fullName>Ubiquinol-cytochrome-c reductase complex cytochrome b subunit</fullName>
    </alternativeName>
</protein>
<gene>
    <name type="primary">MT-CYB</name>
    <name type="synonym">COB</name>
    <name type="synonym">CYTB</name>
    <name type="synonym">MTCYB</name>
</gene>
<accession>Q37713</accession>
<reference key="1">
    <citation type="journal article" date="1994" name="J. Mol. Evol.">
        <title>Speciation in the Artemia genus: mitochondrial DNA analysis of bisexual and parthenogenetic brine shrimps.</title>
        <authorList>
            <person name="Perez M.L."/>
            <person name="Valverde J.R."/>
            <person name="Batuecas B."/>
            <person name="Amat F."/>
            <person name="Marco R."/>
            <person name="Garesse R."/>
        </authorList>
    </citation>
    <scope>NUCLEOTIDE SEQUENCE [GENOMIC DNA]</scope>
</reference>
<feature type="chain" id="PRO_0000060641" description="Cytochrome b">
    <location>
        <begin position="1"/>
        <end position="381"/>
    </location>
</feature>
<feature type="transmembrane region" description="Helical" evidence="2">
    <location>
        <begin position="38"/>
        <end position="58"/>
    </location>
</feature>
<feature type="transmembrane region" description="Helical" evidence="2">
    <location>
        <begin position="82"/>
        <end position="103"/>
    </location>
</feature>
<feature type="transmembrane region" description="Helical" evidence="2">
    <location>
        <begin position="118"/>
        <end position="138"/>
    </location>
</feature>
<feature type="transmembrane region" description="Helical" evidence="2">
    <location>
        <begin position="183"/>
        <end position="203"/>
    </location>
</feature>
<feature type="transmembrane region" description="Helical" evidence="2">
    <location>
        <begin position="231"/>
        <end position="251"/>
    </location>
</feature>
<feature type="transmembrane region" description="Helical" evidence="2">
    <location>
        <begin position="293"/>
        <end position="313"/>
    </location>
</feature>
<feature type="transmembrane region" description="Helical" evidence="2">
    <location>
        <begin position="325"/>
        <end position="345"/>
    </location>
</feature>
<feature type="transmembrane region" description="Helical" evidence="2">
    <location>
        <begin position="352"/>
        <end position="372"/>
    </location>
</feature>
<feature type="binding site" description="axial binding residue" evidence="2">
    <location>
        <position position="88"/>
    </location>
    <ligand>
        <name>heme b</name>
        <dbReference type="ChEBI" id="CHEBI:60344"/>
        <label>b562</label>
    </ligand>
    <ligandPart>
        <name>Fe</name>
        <dbReference type="ChEBI" id="CHEBI:18248"/>
    </ligandPart>
</feature>
<feature type="binding site" description="axial binding residue" evidence="2">
    <location>
        <position position="102"/>
    </location>
    <ligand>
        <name>heme b</name>
        <dbReference type="ChEBI" id="CHEBI:60344"/>
        <label>b566</label>
    </ligand>
    <ligandPart>
        <name>Fe</name>
        <dbReference type="ChEBI" id="CHEBI:18248"/>
    </ligandPart>
</feature>
<feature type="binding site" description="axial binding residue" evidence="2">
    <location>
        <position position="187"/>
    </location>
    <ligand>
        <name>heme b</name>
        <dbReference type="ChEBI" id="CHEBI:60344"/>
        <label>b562</label>
    </ligand>
    <ligandPart>
        <name>Fe</name>
        <dbReference type="ChEBI" id="CHEBI:18248"/>
    </ligandPart>
</feature>
<feature type="binding site" description="axial binding residue" evidence="2">
    <location>
        <position position="201"/>
    </location>
    <ligand>
        <name>heme b</name>
        <dbReference type="ChEBI" id="CHEBI:60344"/>
        <label>b566</label>
    </ligand>
    <ligandPart>
        <name>Fe</name>
        <dbReference type="ChEBI" id="CHEBI:18248"/>
    </ligandPart>
</feature>
<feature type="binding site" evidence="2">
    <location>
        <position position="206"/>
    </location>
    <ligand>
        <name>a ubiquinone</name>
        <dbReference type="ChEBI" id="CHEBI:16389"/>
    </ligand>
</feature>
<keyword id="KW-0249">Electron transport</keyword>
<keyword id="KW-0349">Heme</keyword>
<keyword id="KW-0408">Iron</keyword>
<keyword id="KW-0472">Membrane</keyword>
<keyword id="KW-0479">Metal-binding</keyword>
<keyword id="KW-0496">Mitochondrion</keyword>
<keyword id="KW-0999">Mitochondrion inner membrane</keyword>
<keyword id="KW-0679">Respiratory chain</keyword>
<keyword id="KW-0812">Transmembrane</keyword>
<keyword id="KW-1133">Transmembrane helix</keyword>
<keyword id="KW-0813">Transport</keyword>
<keyword id="KW-0830">Ubiquinone</keyword>